<name>PSBO_SOLTU</name>
<feature type="transit peptide" description="Chloroplast">
    <location>
        <begin position="1"/>
        <end position="85"/>
    </location>
</feature>
<feature type="chain" id="PRO_0000029560" description="Oxygen-evolving enhancer protein 1, chloroplastic">
    <location>
        <begin position="86"/>
        <end position="333"/>
    </location>
</feature>
<organism>
    <name type="scientific">Solanum tuberosum</name>
    <name type="common">Potato</name>
    <dbReference type="NCBI Taxonomy" id="4113"/>
    <lineage>
        <taxon>Eukaryota</taxon>
        <taxon>Viridiplantae</taxon>
        <taxon>Streptophyta</taxon>
        <taxon>Embryophyta</taxon>
        <taxon>Tracheophyta</taxon>
        <taxon>Spermatophyta</taxon>
        <taxon>Magnoliopsida</taxon>
        <taxon>eudicotyledons</taxon>
        <taxon>Gunneridae</taxon>
        <taxon>Pentapetalae</taxon>
        <taxon>asterids</taxon>
        <taxon>lamiids</taxon>
        <taxon>Solanales</taxon>
        <taxon>Solanaceae</taxon>
        <taxon>Solanoideae</taxon>
        <taxon>Solaneae</taxon>
        <taxon>Solanum</taxon>
    </lineage>
</organism>
<accession>P26320</accession>
<protein>
    <recommendedName>
        <fullName>Oxygen-evolving enhancer protein 1, chloroplastic</fullName>
        <shortName>OEE1</shortName>
    </recommendedName>
    <alternativeName>
        <fullName>33 kDa subunit of oxygen evolving system of photosystem II</fullName>
    </alternativeName>
    <alternativeName>
        <fullName>33 kDa thylakoid membrane protein</fullName>
    </alternativeName>
    <alternativeName>
        <fullName>OEC 33 kDa subunit</fullName>
    </alternativeName>
</protein>
<proteinExistence type="evidence at transcript level"/>
<keyword id="KW-0150">Chloroplast</keyword>
<keyword id="KW-0464">Manganese</keyword>
<keyword id="KW-0472">Membrane</keyword>
<keyword id="KW-0602">Photosynthesis</keyword>
<keyword id="KW-0604">Photosystem II</keyword>
<keyword id="KW-0934">Plastid</keyword>
<keyword id="KW-1185">Reference proteome</keyword>
<keyword id="KW-0793">Thylakoid</keyword>
<keyword id="KW-0809">Transit peptide</keyword>
<dbReference type="EMBL" id="X17578">
    <property type="protein sequence ID" value="CAA35601.1"/>
    <property type="status" value="ALT_SEQ"/>
    <property type="molecule type" value="mRNA"/>
</dbReference>
<dbReference type="PIR" id="S16586">
    <property type="entry name" value="S16586"/>
</dbReference>
<dbReference type="SMR" id="P26320"/>
<dbReference type="FunCoup" id="P26320">
    <property type="interactions" value="1044"/>
</dbReference>
<dbReference type="STRING" id="4113.P26320"/>
<dbReference type="PaxDb" id="4113-PGSC0003DMT400026009"/>
<dbReference type="eggNOG" id="ENOG502QRXA">
    <property type="taxonomic scope" value="Eukaryota"/>
</dbReference>
<dbReference type="InParanoid" id="P26320"/>
<dbReference type="Proteomes" id="UP000011115">
    <property type="component" value="Unassembled WGS sequence"/>
</dbReference>
<dbReference type="ExpressionAtlas" id="P26320">
    <property type="expression patterns" value="baseline and differential"/>
</dbReference>
<dbReference type="GO" id="GO:0009535">
    <property type="term" value="C:chloroplast thylakoid membrane"/>
    <property type="evidence" value="ECO:0007669"/>
    <property type="project" value="UniProtKB-SubCell"/>
</dbReference>
<dbReference type="GO" id="GO:0009654">
    <property type="term" value="C:photosystem II oxygen evolving complex"/>
    <property type="evidence" value="ECO:0007669"/>
    <property type="project" value="InterPro"/>
</dbReference>
<dbReference type="GO" id="GO:0010242">
    <property type="term" value="F:oxygen evolving activity"/>
    <property type="evidence" value="ECO:0007669"/>
    <property type="project" value="InterPro"/>
</dbReference>
<dbReference type="GO" id="GO:0010207">
    <property type="term" value="P:photosystem II assembly"/>
    <property type="evidence" value="ECO:0007669"/>
    <property type="project" value="InterPro"/>
</dbReference>
<dbReference type="GO" id="GO:0042549">
    <property type="term" value="P:photosystem II stabilization"/>
    <property type="evidence" value="ECO:0007669"/>
    <property type="project" value="InterPro"/>
</dbReference>
<dbReference type="FunFam" id="3.30.2050.10:FF:000001">
    <property type="entry name" value="Oxygen-evolving enhancer protein 1, chloroplastic"/>
    <property type="match status" value="1"/>
</dbReference>
<dbReference type="Gene3D" id="3.30.2050.10">
    <property type="entry name" value="photosynthetic oxygen evolving center domain"/>
    <property type="match status" value="1"/>
</dbReference>
<dbReference type="Gene3D" id="2.40.160.30">
    <property type="entry name" value="Photosystem II, cytochrome c-550 precursor"/>
    <property type="match status" value="1"/>
</dbReference>
<dbReference type="InterPro" id="IPR011250">
    <property type="entry name" value="OMP/PagP_b-brl"/>
</dbReference>
<dbReference type="InterPro" id="IPR002628">
    <property type="entry name" value="PsbO"/>
</dbReference>
<dbReference type="PANTHER" id="PTHR34058">
    <property type="entry name" value="OXYGEN-EVOLVING ENHANCER PROTEIN 1-2, CHLOROPLASTIC"/>
    <property type="match status" value="1"/>
</dbReference>
<dbReference type="Pfam" id="PF01716">
    <property type="entry name" value="MSP"/>
    <property type="match status" value="1"/>
</dbReference>
<dbReference type="SUPFAM" id="SSF56925">
    <property type="entry name" value="OMPA-like"/>
    <property type="match status" value="1"/>
</dbReference>
<sequence length="333" mass="35389">MAASLQAAATLMQPTKVGGVSARNNLQLRSSQSVSKAFGLEPSASRLSCSLQTDLKDFAQKCTDAAKIAGFALATSALVVSGANAEGVPKRLTFDEIQSKTYMEVKGTGTANQCPTIDGGVDSFAFKPGKYNAKKFCLEPTSFTVKAEGVSKNSAPDFQKTKLMTRLTYTLDEIEGPFEVSPDGTVKFEEKDGIDYAAVTVQLPGGERVPFLFTIKQLVASGKPESFSVDFLVPSYRGSSFLDPKGRGGSTGYDNAVALPAGGRGDEEELQKENVKNTASLTGKITFTVTKSNPQTGEVIGVFESIQPSDTDLGAKTPKDVKIQGIWYAQLES</sequence>
<evidence type="ECO:0000250" key="1"/>
<evidence type="ECO:0000305" key="2"/>
<gene>
    <name type="primary">PSBO</name>
</gene>
<comment type="function">
    <text evidence="1">Stabilizes the manganese cluster which is the primary site of water splitting.</text>
</comment>
<comment type="subcellular location">
    <subcellularLocation>
        <location>Plastid</location>
        <location>Chloroplast thylakoid membrane</location>
    </subcellularLocation>
    <text>Associated with the photosystem II complex.</text>
</comment>
<comment type="similarity">
    <text evidence="2">Belongs to the PsbO family.</text>
</comment>
<reference key="1">
    <citation type="journal article" date="1991" name="Plant Mol. Biol.">
        <title>Isolation and analysis of cDNA encoding the 33 kDa precursor protein of the oxygen-evolving complex of potato.</title>
        <authorList>
            <person name="van Spanje M."/>
            <person name="Dirkse W.G."/>
            <person name="Nap J.-P."/>
            <person name="Stiekema W.J."/>
        </authorList>
    </citation>
    <scope>NUCLEOTIDE SEQUENCE [MRNA]</scope>
    <source>
        <strain>cv. Bintje</strain>
        <tissue>Leaf</tissue>
    </source>
</reference>